<reference key="1">
    <citation type="submission" date="2008-01" db="EMBL/GenBank/DDBJ databases">
        <title>Complete sequence of Thermoanaerobacter pseudethanolicus 39E.</title>
        <authorList>
            <person name="Copeland A."/>
            <person name="Lucas S."/>
            <person name="Lapidus A."/>
            <person name="Barry K."/>
            <person name="Glavina del Rio T."/>
            <person name="Dalin E."/>
            <person name="Tice H."/>
            <person name="Pitluck S."/>
            <person name="Bruce D."/>
            <person name="Goodwin L."/>
            <person name="Saunders E."/>
            <person name="Brettin T."/>
            <person name="Detter J.C."/>
            <person name="Han C."/>
            <person name="Schmutz J."/>
            <person name="Larimer F."/>
            <person name="Land M."/>
            <person name="Hauser L."/>
            <person name="Kyrpides N."/>
            <person name="Lykidis A."/>
            <person name="Hemme C."/>
            <person name="Fields M.W."/>
            <person name="He Z."/>
            <person name="Zhou J."/>
            <person name="Richardson P."/>
        </authorList>
    </citation>
    <scope>NUCLEOTIDE SEQUENCE [LARGE SCALE GENOMIC DNA]</scope>
    <source>
        <strain>ATCC 33223 / DSM 2355 / 39E</strain>
    </source>
</reference>
<feature type="chain" id="PRO_1000141631" description="Large ribosomal subunit protein uL2">
    <location>
        <begin position="1"/>
        <end position="275"/>
    </location>
</feature>
<feature type="region of interest" description="Disordered" evidence="2">
    <location>
        <begin position="224"/>
        <end position="275"/>
    </location>
</feature>
<feature type="compositionally biased region" description="Basic and acidic residues" evidence="2">
    <location>
        <begin position="264"/>
        <end position="275"/>
    </location>
</feature>
<accession>B0KCK3</accession>
<keyword id="KW-1185">Reference proteome</keyword>
<keyword id="KW-0687">Ribonucleoprotein</keyword>
<keyword id="KW-0689">Ribosomal protein</keyword>
<keyword id="KW-0694">RNA-binding</keyword>
<keyword id="KW-0699">rRNA-binding</keyword>
<dbReference type="EMBL" id="CP000924">
    <property type="protein sequence ID" value="ABY94046.1"/>
    <property type="molecule type" value="Genomic_DNA"/>
</dbReference>
<dbReference type="RefSeq" id="WP_003868563.1">
    <property type="nucleotide sequence ID" value="NC_010321.1"/>
</dbReference>
<dbReference type="SMR" id="B0KCK3"/>
<dbReference type="STRING" id="340099.Teth39_0377"/>
<dbReference type="KEGG" id="tpd:Teth39_0377"/>
<dbReference type="eggNOG" id="COG0090">
    <property type="taxonomic scope" value="Bacteria"/>
</dbReference>
<dbReference type="HOGENOM" id="CLU_036235_2_1_9"/>
<dbReference type="Proteomes" id="UP000002156">
    <property type="component" value="Chromosome"/>
</dbReference>
<dbReference type="GO" id="GO:0015934">
    <property type="term" value="C:large ribosomal subunit"/>
    <property type="evidence" value="ECO:0007669"/>
    <property type="project" value="InterPro"/>
</dbReference>
<dbReference type="GO" id="GO:0019843">
    <property type="term" value="F:rRNA binding"/>
    <property type="evidence" value="ECO:0007669"/>
    <property type="project" value="UniProtKB-UniRule"/>
</dbReference>
<dbReference type="GO" id="GO:0003735">
    <property type="term" value="F:structural constituent of ribosome"/>
    <property type="evidence" value="ECO:0007669"/>
    <property type="project" value="InterPro"/>
</dbReference>
<dbReference type="GO" id="GO:0016740">
    <property type="term" value="F:transferase activity"/>
    <property type="evidence" value="ECO:0007669"/>
    <property type="project" value="InterPro"/>
</dbReference>
<dbReference type="GO" id="GO:0002181">
    <property type="term" value="P:cytoplasmic translation"/>
    <property type="evidence" value="ECO:0007669"/>
    <property type="project" value="TreeGrafter"/>
</dbReference>
<dbReference type="FunFam" id="2.30.30.30:FF:000001">
    <property type="entry name" value="50S ribosomal protein L2"/>
    <property type="match status" value="1"/>
</dbReference>
<dbReference type="FunFam" id="2.40.50.140:FF:000003">
    <property type="entry name" value="50S ribosomal protein L2"/>
    <property type="match status" value="1"/>
</dbReference>
<dbReference type="FunFam" id="4.10.950.10:FF:000001">
    <property type="entry name" value="50S ribosomal protein L2"/>
    <property type="match status" value="1"/>
</dbReference>
<dbReference type="Gene3D" id="2.30.30.30">
    <property type="match status" value="1"/>
</dbReference>
<dbReference type="Gene3D" id="2.40.50.140">
    <property type="entry name" value="Nucleic acid-binding proteins"/>
    <property type="match status" value="1"/>
</dbReference>
<dbReference type="Gene3D" id="4.10.950.10">
    <property type="entry name" value="Ribosomal protein L2, domain 3"/>
    <property type="match status" value="1"/>
</dbReference>
<dbReference type="HAMAP" id="MF_01320_B">
    <property type="entry name" value="Ribosomal_uL2_B"/>
    <property type="match status" value="1"/>
</dbReference>
<dbReference type="InterPro" id="IPR012340">
    <property type="entry name" value="NA-bd_OB-fold"/>
</dbReference>
<dbReference type="InterPro" id="IPR014722">
    <property type="entry name" value="Rib_uL2_dom2"/>
</dbReference>
<dbReference type="InterPro" id="IPR002171">
    <property type="entry name" value="Ribosomal_uL2"/>
</dbReference>
<dbReference type="InterPro" id="IPR005880">
    <property type="entry name" value="Ribosomal_uL2_bac/org-type"/>
</dbReference>
<dbReference type="InterPro" id="IPR022669">
    <property type="entry name" value="Ribosomal_uL2_C"/>
</dbReference>
<dbReference type="InterPro" id="IPR022671">
    <property type="entry name" value="Ribosomal_uL2_CS"/>
</dbReference>
<dbReference type="InterPro" id="IPR014726">
    <property type="entry name" value="Ribosomal_uL2_dom3"/>
</dbReference>
<dbReference type="InterPro" id="IPR022666">
    <property type="entry name" value="Ribosomal_uL2_RNA-bd_dom"/>
</dbReference>
<dbReference type="InterPro" id="IPR008991">
    <property type="entry name" value="Translation_prot_SH3-like_sf"/>
</dbReference>
<dbReference type="NCBIfam" id="TIGR01171">
    <property type="entry name" value="rplB_bact"/>
    <property type="match status" value="1"/>
</dbReference>
<dbReference type="PANTHER" id="PTHR13691:SF5">
    <property type="entry name" value="LARGE RIBOSOMAL SUBUNIT PROTEIN UL2M"/>
    <property type="match status" value="1"/>
</dbReference>
<dbReference type="PANTHER" id="PTHR13691">
    <property type="entry name" value="RIBOSOMAL PROTEIN L2"/>
    <property type="match status" value="1"/>
</dbReference>
<dbReference type="Pfam" id="PF00181">
    <property type="entry name" value="Ribosomal_L2"/>
    <property type="match status" value="1"/>
</dbReference>
<dbReference type="Pfam" id="PF03947">
    <property type="entry name" value="Ribosomal_L2_C"/>
    <property type="match status" value="1"/>
</dbReference>
<dbReference type="PIRSF" id="PIRSF002158">
    <property type="entry name" value="Ribosomal_L2"/>
    <property type="match status" value="1"/>
</dbReference>
<dbReference type="SMART" id="SM01383">
    <property type="entry name" value="Ribosomal_L2"/>
    <property type="match status" value="1"/>
</dbReference>
<dbReference type="SMART" id="SM01382">
    <property type="entry name" value="Ribosomal_L2_C"/>
    <property type="match status" value="1"/>
</dbReference>
<dbReference type="SUPFAM" id="SSF50249">
    <property type="entry name" value="Nucleic acid-binding proteins"/>
    <property type="match status" value="1"/>
</dbReference>
<dbReference type="SUPFAM" id="SSF50104">
    <property type="entry name" value="Translation proteins SH3-like domain"/>
    <property type="match status" value="1"/>
</dbReference>
<dbReference type="PROSITE" id="PS00467">
    <property type="entry name" value="RIBOSOMAL_L2"/>
    <property type="match status" value="1"/>
</dbReference>
<evidence type="ECO:0000255" key="1">
    <source>
        <dbReference type="HAMAP-Rule" id="MF_01320"/>
    </source>
</evidence>
<evidence type="ECO:0000256" key="2">
    <source>
        <dbReference type="SAM" id="MobiDB-lite"/>
    </source>
</evidence>
<evidence type="ECO:0000305" key="3"/>
<name>RL2_THEP3</name>
<gene>
    <name evidence="1" type="primary">rplB</name>
    <name type="ordered locus">Teth39_0377</name>
</gene>
<sequence length="275" mass="30145">MGIKSFKPTSPGRRQMTVLTFEEVTKDKPEKSLVVTLTKTGGRNVYGRITVRHRGGGHKRKYRIIDFKRDKDGIPGKVAAIEYDPNRTAYIALIHYLDGEKRYIIAPYGLKVGDIIESGENVDIKVGNALPLRNIPVGTIIHNIELIPGKGGQLVRAAGTAAQLMAKEGDYVQVRMPSGEIRLIKADCRATIGQVSNLDHENVKIGKAGRSRWLGIRPTVRGSAMNPVDHPHGGGEGKAPIGHPGPLTPWGKPALGYKTRKKGKASDKFIIRRRK</sequence>
<comment type="function">
    <text evidence="1">One of the primary rRNA binding proteins. Required for association of the 30S and 50S subunits to form the 70S ribosome, for tRNA binding and peptide bond formation. It has been suggested to have peptidyltransferase activity; this is somewhat controversial. Makes several contacts with the 16S rRNA in the 70S ribosome.</text>
</comment>
<comment type="subunit">
    <text evidence="1">Part of the 50S ribosomal subunit. Forms a bridge to the 30S subunit in the 70S ribosome.</text>
</comment>
<comment type="similarity">
    <text evidence="1">Belongs to the universal ribosomal protein uL2 family.</text>
</comment>
<protein>
    <recommendedName>
        <fullName evidence="1">Large ribosomal subunit protein uL2</fullName>
    </recommendedName>
    <alternativeName>
        <fullName evidence="3">50S ribosomal protein L2</fullName>
    </alternativeName>
</protein>
<proteinExistence type="inferred from homology"/>
<organism>
    <name type="scientific">Thermoanaerobacter pseudethanolicus (strain ATCC 33223 / 39E)</name>
    <name type="common">Clostridium thermohydrosulfuricum</name>
    <dbReference type="NCBI Taxonomy" id="340099"/>
    <lineage>
        <taxon>Bacteria</taxon>
        <taxon>Bacillati</taxon>
        <taxon>Bacillota</taxon>
        <taxon>Clostridia</taxon>
        <taxon>Thermoanaerobacterales</taxon>
        <taxon>Thermoanaerobacteraceae</taxon>
        <taxon>Thermoanaerobacter</taxon>
    </lineage>
</organism>